<sequence length="320" mass="35568">MRSAQVYRWQIPMDAGVVLRDRRLKTRDGLYVCLREGEREGWGEISPLPGFSQETWEEAQSVLLAWVNNWLAGDCELPQMPSVAFGVSCALAELADTLPQAANYRAAPLCNGDPDDLILKLADMPGEKVAKVKVGLYEAVRDGMVVNLLLEAIPDLHLRLDANRAWTPLKGQQFAKYVNPDYRHRIAFLEEPCKTRDDSRAFARETGIAIAWDESLREPDFAFVAEEGVRAVVIKPTLTGSLEKVREQVQAAHALRLTAVISSSIESSLGLTQLARIAAWLTPDTIPGLDTLDLMQAQQVRRWPGSTLPVVEVDALERLL</sequence>
<reference key="1">
    <citation type="submission" date="2008-05" db="EMBL/GenBank/DDBJ databases">
        <title>Complete sequence of Shigella boydii serotype 18 strain BS512.</title>
        <authorList>
            <person name="Rasko D.A."/>
            <person name="Rosovitz M."/>
            <person name="Maurelli A.T."/>
            <person name="Myers G."/>
            <person name="Seshadri R."/>
            <person name="Cer R."/>
            <person name="Jiang L."/>
            <person name="Ravel J."/>
            <person name="Sebastian Y."/>
        </authorList>
    </citation>
    <scope>NUCLEOTIDE SEQUENCE [LARGE SCALE GENOMIC DNA]</scope>
    <source>
        <strain>CDC 3083-94 / BS512</strain>
    </source>
</reference>
<protein>
    <recommendedName>
        <fullName evidence="1">o-succinylbenzoate synthase</fullName>
        <shortName evidence="1">OSB synthase</shortName>
        <shortName evidence="1">OSBS</shortName>
        <ecNumber evidence="1">4.2.1.113</ecNumber>
    </recommendedName>
    <alternativeName>
        <fullName evidence="1">4-(2'-carboxyphenyl)-4-oxybutyric acid synthase</fullName>
    </alternativeName>
    <alternativeName>
        <fullName evidence="1">o-succinylbenzoic acid synthase</fullName>
    </alternativeName>
</protein>
<feature type="chain" id="PRO_1000125586" description="o-succinylbenzoate synthase">
    <location>
        <begin position="1"/>
        <end position="320"/>
    </location>
</feature>
<feature type="active site" description="Proton donor" evidence="1">
    <location>
        <position position="133"/>
    </location>
</feature>
<feature type="active site" description="Proton acceptor" evidence="1">
    <location>
        <position position="235"/>
    </location>
</feature>
<feature type="binding site" evidence="1">
    <location>
        <position position="161"/>
    </location>
    <ligand>
        <name>Mg(2+)</name>
        <dbReference type="ChEBI" id="CHEBI:18420"/>
    </ligand>
</feature>
<feature type="binding site" evidence="1">
    <location>
        <position position="190"/>
    </location>
    <ligand>
        <name>Mg(2+)</name>
        <dbReference type="ChEBI" id="CHEBI:18420"/>
    </ligand>
</feature>
<feature type="binding site" evidence="1">
    <location>
        <position position="213"/>
    </location>
    <ligand>
        <name>Mg(2+)</name>
        <dbReference type="ChEBI" id="CHEBI:18420"/>
    </ligand>
</feature>
<name>MENC_SHIB3</name>
<proteinExistence type="inferred from homology"/>
<keyword id="KW-0456">Lyase</keyword>
<keyword id="KW-0460">Magnesium</keyword>
<keyword id="KW-0474">Menaquinone biosynthesis</keyword>
<keyword id="KW-0479">Metal-binding</keyword>
<keyword id="KW-1185">Reference proteome</keyword>
<gene>
    <name evidence="1" type="primary">menC</name>
    <name type="ordered locus">SbBS512_E2640</name>
</gene>
<comment type="function">
    <text evidence="1">Converts 2-succinyl-6-hydroxy-2,4-cyclohexadiene-1-carboxylate (SHCHC) to 2-succinylbenzoate (OSB).</text>
</comment>
<comment type="catalytic activity">
    <reaction evidence="1">
        <text>(1R,6R)-6-hydroxy-2-succinyl-cyclohexa-2,4-diene-1-carboxylate = 2-succinylbenzoate + H2O</text>
        <dbReference type="Rhea" id="RHEA:10196"/>
        <dbReference type="ChEBI" id="CHEBI:15377"/>
        <dbReference type="ChEBI" id="CHEBI:18325"/>
        <dbReference type="ChEBI" id="CHEBI:58689"/>
        <dbReference type="EC" id="4.2.1.113"/>
    </reaction>
</comment>
<comment type="cofactor">
    <cofactor evidence="1">
        <name>a divalent metal cation</name>
        <dbReference type="ChEBI" id="CHEBI:60240"/>
    </cofactor>
</comment>
<comment type="pathway">
    <text evidence="1">Quinol/quinone metabolism; 1,4-dihydroxy-2-naphthoate biosynthesis; 1,4-dihydroxy-2-naphthoate from chorismate: step 4/7.</text>
</comment>
<comment type="pathway">
    <text evidence="1">Quinol/quinone metabolism; menaquinone biosynthesis.</text>
</comment>
<comment type="similarity">
    <text evidence="1">Belongs to the mandelate racemase/muconate lactonizing enzyme family. MenC type 1 subfamily.</text>
</comment>
<dbReference type="EC" id="4.2.1.113" evidence="1"/>
<dbReference type="EMBL" id="CP001063">
    <property type="protein sequence ID" value="ACD07749.1"/>
    <property type="molecule type" value="Genomic_DNA"/>
</dbReference>
<dbReference type="RefSeq" id="WP_001255610.1">
    <property type="nucleotide sequence ID" value="NC_010658.1"/>
</dbReference>
<dbReference type="SMR" id="B2TW47"/>
<dbReference type="STRING" id="344609.SbBS512_E2640"/>
<dbReference type="KEGG" id="sbc:SbBS512_E2640"/>
<dbReference type="HOGENOM" id="CLU_030273_0_1_6"/>
<dbReference type="UniPathway" id="UPA00079"/>
<dbReference type="UniPathway" id="UPA01057">
    <property type="reaction ID" value="UER00165"/>
</dbReference>
<dbReference type="Proteomes" id="UP000001030">
    <property type="component" value="Chromosome"/>
</dbReference>
<dbReference type="GO" id="GO:0000287">
    <property type="term" value="F:magnesium ion binding"/>
    <property type="evidence" value="ECO:0007669"/>
    <property type="project" value="UniProtKB-UniRule"/>
</dbReference>
<dbReference type="GO" id="GO:0043748">
    <property type="term" value="F:O-succinylbenzoate synthase activity"/>
    <property type="evidence" value="ECO:0007669"/>
    <property type="project" value="UniProtKB-EC"/>
</dbReference>
<dbReference type="GO" id="GO:0009234">
    <property type="term" value="P:menaquinone biosynthetic process"/>
    <property type="evidence" value="ECO:0007669"/>
    <property type="project" value="UniProtKB-UniRule"/>
</dbReference>
<dbReference type="CDD" id="cd03320">
    <property type="entry name" value="OSBS"/>
    <property type="match status" value="1"/>
</dbReference>
<dbReference type="FunFam" id="3.20.20.120:FF:000006">
    <property type="entry name" value="o-succinylbenzoate synthase"/>
    <property type="match status" value="1"/>
</dbReference>
<dbReference type="FunFam" id="3.30.390.10:FF:000005">
    <property type="entry name" value="o-succinylbenzoate synthase"/>
    <property type="match status" value="1"/>
</dbReference>
<dbReference type="Gene3D" id="3.20.20.120">
    <property type="entry name" value="Enolase-like C-terminal domain"/>
    <property type="match status" value="1"/>
</dbReference>
<dbReference type="Gene3D" id="3.30.390.10">
    <property type="entry name" value="Enolase-like, N-terminal domain"/>
    <property type="match status" value="1"/>
</dbReference>
<dbReference type="HAMAP" id="MF_00470">
    <property type="entry name" value="MenC_1"/>
    <property type="match status" value="1"/>
</dbReference>
<dbReference type="InterPro" id="IPR036849">
    <property type="entry name" value="Enolase-like_C_sf"/>
</dbReference>
<dbReference type="InterPro" id="IPR029017">
    <property type="entry name" value="Enolase-like_N"/>
</dbReference>
<dbReference type="InterPro" id="IPR029065">
    <property type="entry name" value="Enolase_C-like"/>
</dbReference>
<dbReference type="InterPro" id="IPR013342">
    <property type="entry name" value="Mandelate_racemase_C"/>
</dbReference>
<dbReference type="InterPro" id="IPR010196">
    <property type="entry name" value="OSB_synthase_MenC1"/>
</dbReference>
<dbReference type="InterPro" id="IPR041338">
    <property type="entry name" value="OSBS_N"/>
</dbReference>
<dbReference type="NCBIfam" id="TIGR01927">
    <property type="entry name" value="menC_gam_Gplu"/>
    <property type="match status" value="1"/>
</dbReference>
<dbReference type="NCBIfam" id="NF003473">
    <property type="entry name" value="PRK05105.1"/>
    <property type="match status" value="1"/>
</dbReference>
<dbReference type="PANTHER" id="PTHR48073:SF2">
    <property type="entry name" value="O-SUCCINYLBENZOATE SYNTHASE"/>
    <property type="match status" value="1"/>
</dbReference>
<dbReference type="PANTHER" id="PTHR48073">
    <property type="entry name" value="O-SUCCINYLBENZOATE SYNTHASE-RELATED"/>
    <property type="match status" value="1"/>
</dbReference>
<dbReference type="Pfam" id="PF21508">
    <property type="entry name" value="MenC_N"/>
    <property type="match status" value="1"/>
</dbReference>
<dbReference type="Pfam" id="PF13378">
    <property type="entry name" value="MR_MLE_C"/>
    <property type="match status" value="1"/>
</dbReference>
<dbReference type="SFLD" id="SFLDS00001">
    <property type="entry name" value="Enolase"/>
    <property type="match status" value="1"/>
</dbReference>
<dbReference type="SFLD" id="SFLDF00009">
    <property type="entry name" value="o-succinylbenzoate_synthase"/>
    <property type="match status" value="1"/>
</dbReference>
<dbReference type="SMART" id="SM00922">
    <property type="entry name" value="MR_MLE"/>
    <property type="match status" value="1"/>
</dbReference>
<dbReference type="SUPFAM" id="SSF51604">
    <property type="entry name" value="Enolase C-terminal domain-like"/>
    <property type="match status" value="1"/>
</dbReference>
<dbReference type="SUPFAM" id="SSF54826">
    <property type="entry name" value="Enolase N-terminal domain-like"/>
    <property type="match status" value="1"/>
</dbReference>
<evidence type="ECO:0000255" key="1">
    <source>
        <dbReference type="HAMAP-Rule" id="MF_00470"/>
    </source>
</evidence>
<organism>
    <name type="scientific">Shigella boydii serotype 18 (strain CDC 3083-94 / BS512)</name>
    <dbReference type="NCBI Taxonomy" id="344609"/>
    <lineage>
        <taxon>Bacteria</taxon>
        <taxon>Pseudomonadati</taxon>
        <taxon>Pseudomonadota</taxon>
        <taxon>Gammaproteobacteria</taxon>
        <taxon>Enterobacterales</taxon>
        <taxon>Enterobacteriaceae</taxon>
        <taxon>Shigella</taxon>
    </lineage>
</organism>
<accession>B2TW47</accession>